<name>MECA_STAAM</name>
<organism>
    <name type="scientific">Staphylococcus aureus (strain Mu50 / ATCC 700699)</name>
    <dbReference type="NCBI Taxonomy" id="158878"/>
    <lineage>
        <taxon>Bacteria</taxon>
        <taxon>Bacillati</taxon>
        <taxon>Bacillota</taxon>
        <taxon>Bacilli</taxon>
        <taxon>Bacillales</taxon>
        <taxon>Staphylococcaceae</taxon>
        <taxon>Staphylococcus</taxon>
    </lineage>
</organism>
<dbReference type="EMBL" id="BA000017">
    <property type="protein sequence ID" value="BAB57160.1"/>
    <property type="molecule type" value="Genomic_DNA"/>
</dbReference>
<dbReference type="RefSeq" id="WP_001217728.1">
    <property type="nucleotide sequence ID" value="NC_002758.2"/>
</dbReference>
<dbReference type="SMR" id="P60184"/>
<dbReference type="GeneID" id="98345315"/>
<dbReference type="KEGG" id="sav:SAV0998"/>
<dbReference type="HOGENOM" id="CLU_071496_2_1_9"/>
<dbReference type="PhylomeDB" id="P60184"/>
<dbReference type="Proteomes" id="UP000002481">
    <property type="component" value="Chromosome"/>
</dbReference>
<dbReference type="GO" id="GO:0030674">
    <property type="term" value="F:protein-macromolecule adaptor activity"/>
    <property type="evidence" value="ECO:0007669"/>
    <property type="project" value="UniProtKB-UniRule"/>
</dbReference>
<dbReference type="Gene3D" id="3.30.70.1950">
    <property type="match status" value="1"/>
</dbReference>
<dbReference type="HAMAP" id="MF_01124">
    <property type="entry name" value="MecA"/>
    <property type="match status" value="1"/>
</dbReference>
<dbReference type="InterPro" id="IPR038471">
    <property type="entry name" value="MecA_C_sf"/>
</dbReference>
<dbReference type="InterPro" id="IPR008681">
    <property type="entry name" value="Neg-reg_MecA"/>
</dbReference>
<dbReference type="NCBIfam" id="NF002642">
    <property type="entry name" value="PRK02315.1-3"/>
    <property type="match status" value="1"/>
</dbReference>
<dbReference type="NCBIfam" id="NF002644">
    <property type="entry name" value="PRK02315.1-5"/>
    <property type="match status" value="1"/>
</dbReference>
<dbReference type="PANTHER" id="PTHR39161">
    <property type="entry name" value="ADAPTER PROTEIN MECA"/>
    <property type="match status" value="1"/>
</dbReference>
<dbReference type="PANTHER" id="PTHR39161:SF1">
    <property type="entry name" value="ADAPTER PROTEIN MECA 1"/>
    <property type="match status" value="1"/>
</dbReference>
<dbReference type="Pfam" id="PF05389">
    <property type="entry name" value="MecA"/>
    <property type="match status" value="1"/>
</dbReference>
<dbReference type="PIRSF" id="PIRSF029008">
    <property type="entry name" value="MecA"/>
    <property type="match status" value="1"/>
</dbReference>
<accession>P60184</accession>
<accession>Q99V92</accession>
<sequence>MRIERVDDTTVKLFITYSDIEARGFSREDLWTNRKRGEEFFWSMMDEINEEEDFVVEGPLWIQVHAFEKGVEVTISKSKNEDMMNMSDDDATDQFDEQVQELLAQTLEGEDQLEELFEQRTKEKEAQGSKRQKSSARKNTRTIIVKFNDLEDVINYAYHSNPITTEFEDLLYMVDGTYYYAVHFDSHVDQEVINDSYSQLLEFAYPTDRTEVYLNDYAKIIMSHNVTAQVRRYFPETTE</sequence>
<comment type="function">
    <text evidence="1">Enables the recognition and targeting of unfolded and aggregated proteins to the ClpC protease or to other proteins involved in proteolysis.</text>
</comment>
<comment type="subunit">
    <text evidence="1">Homodimer.</text>
</comment>
<comment type="domain">
    <text>The N-terminal domain probably binds unfolded/aggregated proteins; the C-terminal domain interacts with ClpC.</text>
</comment>
<comment type="similarity">
    <text evidence="1">Belongs to the MecA family.</text>
</comment>
<comment type="caution">
    <text evidence="3">This protein is unrelated to the penicillin-binding protein Pbp2a, also called MecA, that confers resistance to methicillin in several strains of S.aureus (MRSA) and is used as a marker for the identification of MRSA isolates.</text>
</comment>
<protein>
    <recommendedName>
        <fullName evidence="1">Adapter protein MecA</fullName>
    </recommendedName>
</protein>
<feature type="chain" id="PRO_0000212277" description="Adapter protein MecA">
    <location>
        <begin position="1"/>
        <end position="239"/>
    </location>
</feature>
<feature type="region of interest" description="Disordered" evidence="2">
    <location>
        <begin position="118"/>
        <end position="137"/>
    </location>
</feature>
<feature type="compositionally biased region" description="Basic and acidic residues" evidence="2">
    <location>
        <begin position="118"/>
        <end position="128"/>
    </location>
</feature>
<evidence type="ECO:0000255" key="1">
    <source>
        <dbReference type="HAMAP-Rule" id="MF_01124"/>
    </source>
</evidence>
<evidence type="ECO:0000256" key="2">
    <source>
        <dbReference type="SAM" id="MobiDB-lite"/>
    </source>
</evidence>
<evidence type="ECO:0000305" key="3"/>
<gene>
    <name evidence="1" type="primary">mecA</name>
    <name type="ordered locus">SAV0998</name>
</gene>
<proteinExistence type="inferred from homology"/>
<reference key="1">
    <citation type="journal article" date="2001" name="Lancet">
        <title>Whole genome sequencing of meticillin-resistant Staphylococcus aureus.</title>
        <authorList>
            <person name="Kuroda M."/>
            <person name="Ohta T."/>
            <person name="Uchiyama I."/>
            <person name="Baba T."/>
            <person name="Yuzawa H."/>
            <person name="Kobayashi I."/>
            <person name="Cui L."/>
            <person name="Oguchi A."/>
            <person name="Aoki K."/>
            <person name="Nagai Y."/>
            <person name="Lian J.-Q."/>
            <person name="Ito T."/>
            <person name="Kanamori M."/>
            <person name="Matsumaru H."/>
            <person name="Maruyama A."/>
            <person name="Murakami H."/>
            <person name="Hosoyama A."/>
            <person name="Mizutani-Ui Y."/>
            <person name="Takahashi N.K."/>
            <person name="Sawano T."/>
            <person name="Inoue R."/>
            <person name="Kaito C."/>
            <person name="Sekimizu K."/>
            <person name="Hirakawa H."/>
            <person name="Kuhara S."/>
            <person name="Goto S."/>
            <person name="Yabuzaki J."/>
            <person name="Kanehisa M."/>
            <person name="Yamashita A."/>
            <person name="Oshima K."/>
            <person name="Furuya K."/>
            <person name="Yoshino C."/>
            <person name="Shiba T."/>
            <person name="Hattori M."/>
            <person name="Ogasawara N."/>
            <person name="Hayashi H."/>
            <person name="Hiramatsu K."/>
        </authorList>
    </citation>
    <scope>NUCLEOTIDE SEQUENCE [LARGE SCALE GENOMIC DNA]</scope>
    <source>
        <strain>Mu50 / ATCC 700699</strain>
    </source>
</reference>